<accession>Q65P96</accession>
<accession>Q62ZN5</accession>
<name>RL24_BACLD</name>
<sequence>MHVKKGDKVMVISGKDKGKQGVILAAFPKKDRVIVEGVNMVKKHSKPTQANPQGGILNQEAPIHVSNVMPLDPKTGEVTRVGYKVENGKKVRIAKKSGQVLDN</sequence>
<evidence type="ECO:0000255" key="1">
    <source>
        <dbReference type="HAMAP-Rule" id="MF_01326"/>
    </source>
</evidence>
<evidence type="ECO:0000305" key="2"/>
<feature type="chain" id="PRO_0000241565" description="Large ribosomal subunit protein uL24">
    <location>
        <begin position="1"/>
        <end position="103"/>
    </location>
</feature>
<gene>
    <name evidence="1" type="primary">rplX</name>
    <name type="ordered locus">BLi00144</name>
    <name type="ordered locus">BL01040</name>
</gene>
<organism>
    <name type="scientific">Bacillus licheniformis (strain ATCC 14580 / DSM 13 / JCM 2505 / CCUG 7422 / NBRC 12200 / NCIMB 9375 / NCTC 10341 / NRRL NRS-1264 / Gibson 46)</name>
    <dbReference type="NCBI Taxonomy" id="279010"/>
    <lineage>
        <taxon>Bacteria</taxon>
        <taxon>Bacillati</taxon>
        <taxon>Bacillota</taxon>
        <taxon>Bacilli</taxon>
        <taxon>Bacillales</taxon>
        <taxon>Bacillaceae</taxon>
        <taxon>Bacillus</taxon>
    </lineage>
</organism>
<protein>
    <recommendedName>
        <fullName evidence="1">Large ribosomal subunit protein uL24</fullName>
    </recommendedName>
    <alternativeName>
        <fullName evidence="2">50S ribosomal protein L24</fullName>
    </alternativeName>
</protein>
<reference key="1">
    <citation type="journal article" date="2004" name="J. Mol. Microbiol. Biotechnol.">
        <title>The complete genome sequence of Bacillus licheniformis DSM13, an organism with great industrial potential.</title>
        <authorList>
            <person name="Veith B."/>
            <person name="Herzberg C."/>
            <person name="Steckel S."/>
            <person name="Feesche J."/>
            <person name="Maurer K.H."/>
            <person name="Ehrenreich P."/>
            <person name="Baeumer S."/>
            <person name="Henne A."/>
            <person name="Liesegang H."/>
            <person name="Merkl R."/>
            <person name="Ehrenreich A."/>
            <person name="Gottschalk G."/>
        </authorList>
    </citation>
    <scope>NUCLEOTIDE SEQUENCE [LARGE SCALE GENOMIC DNA]</scope>
    <source>
        <strain>ATCC 14580 / DSM 13 / JCM 2505 / CCUG 7422 / NBRC 12200 / NCIMB 9375 / NCTC 10341 / NRRL NRS-1264 / Gibson 46</strain>
    </source>
</reference>
<reference key="2">
    <citation type="journal article" date="2004" name="Genome Biol.">
        <title>Complete genome sequence of the industrial bacterium Bacillus licheniformis and comparisons with closely related Bacillus species.</title>
        <authorList>
            <person name="Rey M.W."/>
            <person name="Ramaiya P."/>
            <person name="Nelson B.A."/>
            <person name="Brody-Karpin S.D."/>
            <person name="Zaretsky E.J."/>
            <person name="Tang M."/>
            <person name="Lopez de Leon A."/>
            <person name="Xiang H."/>
            <person name="Gusti V."/>
            <person name="Clausen I.G."/>
            <person name="Olsen P.B."/>
            <person name="Rasmussen M.D."/>
            <person name="Andersen J.T."/>
            <person name="Joergensen P.L."/>
            <person name="Larsen T.S."/>
            <person name="Sorokin A."/>
            <person name="Bolotin A."/>
            <person name="Lapidus A."/>
            <person name="Galleron N."/>
            <person name="Ehrlich S.D."/>
            <person name="Berka R.M."/>
        </authorList>
    </citation>
    <scope>NUCLEOTIDE SEQUENCE [LARGE SCALE GENOMIC DNA]</scope>
    <source>
        <strain>ATCC 14580 / DSM 13 / JCM 2505 / CCUG 7422 / NBRC 12200 / NCIMB 9375 / NCTC 10341 / NRRL NRS-1264 / Gibson 46</strain>
    </source>
</reference>
<dbReference type="EMBL" id="AE017333">
    <property type="protein sequence ID" value="AAU39118.1"/>
    <property type="molecule type" value="Genomic_DNA"/>
</dbReference>
<dbReference type="EMBL" id="CP000002">
    <property type="protein sequence ID" value="AAU21773.1"/>
    <property type="molecule type" value="Genomic_DNA"/>
</dbReference>
<dbReference type="RefSeq" id="WP_003178350.1">
    <property type="nucleotide sequence ID" value="NC_006322.1"/>
</dbReference>
<dbReference type="SMR" id="Q65P96"/>
<dbReference type="STRING" id="279010.BL01040"/>
<dbReference type="GeneID" id="92858892"/>
<dbReference type="KEGG" id="bld:BLi00144"/>
<dbReference type="KEGG" id="bli:BL01040"/>
<dbReference type="eggNOG" id="COG0198">
    <property type="taxonomic scope" value="Bacteria"/>
</dbReference>
<dbReference type="HOGENOM" id="CLU_093315_2_0_9"/>
<dbReference type="Proteomes" id="UP000000606">
    <property type="component" value="Chromosome"/>
</dbReference>
<dbReference type="GO" id="GO:1990904">
    <property type="term" value="C:ribonucleoprotein complex"/>
    <property type="evidence" value="ECO:0007669"/>
    <property type="project" value="UniProtKB-KW"/>
</dbReference>
<dbReference type="GO" id="GO:0005840">
    <property type="term" value="C:ribosome"/>
    <property type="evidence" value="ECO:0007669"/>
    <property type="project" value="UniProtKB-KW"/>
</dbReference>
<dbReference type="GO" id="GO:0019843">
    <property type="term" value="F:rRNA binding"/>
    <property type="evidence" value="ECO:0007669"/>
    <property type="project" value="UniProtKB-UniRule"/>
</dbReference>
<dbReference type="GO" id="GO:0003735">
    <property type="term" value="F:structural constituent of ribosome"/>
    <property type="evidence" value="ECO:0007669"/>
    <property type="project" value="InterPro"/>
</dbReference>
<dbReference type="GO" id="GO:0006412">
    <property type="term" value="P:translation"/>
    <property type="evidence" value="ECO:0007669"/>
    <property type="project" value="UniProtKB-UniRule"/>
</dbReference>
<dbReference type="CDD" id="cd06089">
    <property type="entry name" value="KOW_RPL26"/>
    <property type="match status" value="1"/>
</dbReference>
<dbReference type="FunFam" id="2.30.30.30:FF:000004">
    <property type="entry name" value="50S ribosomal protein L24"/>
    <property type="match status" value="1"/>
</dbReference>
<dbReference type="Gene3D" id="2.30.30.30">
    <property type="match status" value="1"/>
</dbReference>
<dbReference type="HAMAP" id="MF_01326_B">
    <property type="entry name" value="Ribosomal_uL24_B"/>
    <property type="match status" value="1"/>
</dbReference>
<dbReference type="InterPro" id="IPR005824">
    <property type="entry name" value="KOW"/>
</dbReference>
<dbReference type="InterPro" id="IPR014722">
    <property type="entry name" value="Rib_uL2_dom2"/>
</dbReference>
<dbReference type="InterPro" id="IPR003256">
    <property type="entry name" value="Ribosomal_uL24"/>
</dbReference>
<dbReference type="InterPro" id="IPR005825">
    <property type="entry name" value="Ribosomal_uL24_CS"/>
</dbReference>
<dbReference type="InterPro" id="IPR041988">
    <property type="entry name" value="Ribosomal_uL24_KOW"/>
</dbReference>
<dbReference type="InterPro" id="IPR008991">
    <property type="entry name" value="Translation_prot_SH3-like_sf"/>
</dbReference>
<dbReference type="NCBIfam" id="TIGR01079">
    <property type="entry name" value="rplX_bact"/>
    <property type="match status" value="1"/>
</dbReference>
<dbReference type="PANTHER" id="PTHR12903">
    <property type="entry name" value="MITOCHONDRIAL RIBOSOMAL PROTEIN L24"/>
    <property type="match status" value="1"/>
</dbReference>
<dbReference type="Pfam" id="PF00467">
    <property type="entry name" value="KOW"/>
    <property type="match status" value="1"/>
</dbReference>
<dbReference type="Pfam" id="PF17136">
    <property type="entry name" value="ribosomal_L24"/>
    <property type="match status" value="1"/>
</dbReference>
<dbReference type="SMART" id="SM00739">
    <property type="entry name" value="KOW"/>
    <property type="match status" value="1"/>
</dbReference>
<dbReference type="SUPFAM" id="SSF50104">
    <property type="entry name" value="Translation proteins SH3-like domain"/>
    <property type="match status" value="1"/>
</dbReference>
<dbReference type="PROSITE" id="PS01108">
    <property type="entry name" value="RIBOSOMAL_L24"/>
    <property type="match status" value="1"/>
</dbReference>
<proteinExistence type="inferred from homology"/>
<keyword id="KW-1185">Reference proteome</keyword>
<keyword id="KW-0687">Ribonucleoprotein</keyword>
<keyword id="KW-0689">Ribosomal protein</keyword>
<keyword id="KW-0694">RNA-binding</keyword>
<keyword id="KW-0699">rRNA-binding</keyword>
<comment type="function">
    <text evidence="1">One of two assembly initiator proteins, it binds directly to the 5'-end of the 23S rRNA, where it nucleates assembly of the 50S subunit.</text>
</comment>
<comment type="function">
    <text evidence="1">One of the proteins that surrounds the polypeptide exit tunnel on the outside of the subunit.</text>
</comment>
<comment type="subunit">
    <text evidence="1">Part of the 50S ribosomal subunit.</text>
</comment>
<comment type="similarity">
    <text evidence="1">Belongs to the universal ribosomal protein uL24 family.</text>
</comment>